<gene>
    <name evidence="1" type="primary">cca</name>
    <name type="ordered locus">Hhal_2331</name>
</gene>
<protein>
    <recommendedName>
        <fullName evidence="1">Multifunctional CCA protein</fullName>
    </recommendedName>
    <domain>
        <recommendedName>
            <fullName evidence="1">CCA-adding enzyme</fullName>
            <ecNumber evidence="1">2.7.7.72</ecNumber>
        </recommendedName>
        <alternativeName>
            <fullName evidence="1">CCA tRNA nucleotidyltransferase</fullName>
        </alternativeName>
        <alternativeName>
            <fullName evidence="1">tRNA CCA-pyrophosphorylase</fullName>
        </alternativeName>
        <alternativeName>
            <fullName evidence="1">tRNA adenylyl-/cytidylyl-transferase</fullName>
        </alternativeName>
        <alternativeName>
            <fullName evidence="1">tRNA nucleotidyltransferase</fullName>
        </alternativeName>
        <alternativeName>
            <fullName evidence="1">tRNA-NT</fullName>
        </alternativeName>
    </domain>
    <domain>
        <recommendedName>
            <fullName evidence="1">2'-nucleotidase</fullName>
            <ecNumber evidence="1">3.1.3.-</ecNumber>
        </recommendedName>
    </domain>
    <domain>
        <recommendedName>
            <fullName evidence="1">2',3'-cyclic phosphodiesterase</fullName>
            <ecNumber evidence="1">3.1.4.-</ecNumber>
        </recommendedName>
    </domain>
    <domain>
        <recommendedName>
            <fullName evidence="1">Phosphatase</fullName>
            <ecNumber evidence="1">3.1.3.-</ecNumber>
        </recommendedName>
    </domain>
</protein>
<accession>A1WZI2</accession>
<sequence>MERYRVGGAVRDRLLGRPVDEVDWVVVGATPEAMEAAGYRPVGKDFPVFLHPQTGEEHALARTERKTAVGYHGFEFYAAPEVTLEQDLARRDLTINAMAEDAGGRLIDPFGGQVDLQARQLRHVTDAFAEDPVRILRLARFAARFADDGFVVADETMALCQRMVAAGEVDALVPERVWQELARGLMEPTPRRMIEVLRQAGALARLLPEVDALFGVPQSPAHHPEGDAGTHTLMALDAAAAVDASLEARFAVLLHDVGKALTPAEALPRHPGHEEAGVDGARRVSERLKAPRACRDLAVLVTRWHMHAHRALELRPGTVVELFEGLDLFRRPERLEPFLHACLADDRGRGGREASDWPAGDFLRAAFEACRGVSARSFVEQGLRGPEVGEAVREARCRAVAQVPRPDAGAARDGA</sequence>
<comment type="function">
    <text evidence="1">Catalyzes the addition and repair of the essential 3'-terminal CCA sequence in tRNAs without using a nucleic acid template. Adds these three nucleotides in the order of C, C, and A to the tRNA nucleotide-73, using CTP and ATP as substrates and producing inorganic pyrophosphate. tRNA 3'-terminal CCA addition is required both for tRNA processing and repair. Also involved in tRNA surveillance by mediating tandem CCA addition to generate a CCACCA at the 3' terminus of unstable tRNAs. While stable tRNAs receive only 3'-terminal CCA, unstable tRNAs are marked with CCACCA and rapidly degraded.</text>
</comment>
<comment type="catalytic activity">
    <reaction evidence="1">
        <text>a tRNA precursor + 2 CTP + ATP = a tRNA with a 3' CCA end + 3 diphosphate</text>
        <dbReference type="Rhea" id="RHEA:14433"/>
        <dbReference type="Rhea" id="RHEA-COMP:10465"/>
        <dbReference type="Rhea" id="RHEA-COMP:10468"/>
        <dbReference type="ChEBI" id="CHEBI:30616"/>
        <dbReference type="ChEBI" id="CHEBI:33019"/>
        <dbReference type="ChEBI" id="CHEBI:37563"/>
        <dbReference type="ChEBI" id="CHEBI:74896"/>
        <dbReference type="ChEBI" id="CHEBI:83071"/>
        <dbReference type="EC" id="2.7.7.72"/>
    </reaction>
</comment>
<comment type="catalytic activity">
    <reaction evidence="1">
        <text>a tRNA with a 3' CCA end + 2 CTP + ATP = a tRNA with a 3' CCACCA end + 3 diphosphate</text>
        <dbReference type="Rhea" id="RHEA:76235"/>
        <dbReference type="Rhea" id="RHEA-COMP:10468"/>
        <dbReference type="Rhea" id="RHEA-COMP:18655"/>
        <dbReference type="ChEBI" id="CHEBI:30616"/>
        <dbReference type="ChEBI" id="CHEBI:33019"/>
        <dbReference type="ChEBI" id="CHEBI:37563"/>
        <dbReference type="ChEBI" id="CHEBI:83071"/>
        <dbReference type="ChEBI" id="CHEBI:195187"/>
    </reaction>
    <physiologicalReaction direction="left-to-right" evidence="1">
        <dbReference type="Rhea" id="RHEA:76236"/>
    </physiologicalReaction>
</comment>
<comment type="cofactor">
    <cofactor evidence="1">
        <name>Mg(2+)</name>
        <dbReference type="ChEBI" id="CHEBI:18420"/>
    </cofactor>
    <text evidence="1">Magnesium is required for nucleotidyltransferase activity.</text>
</comment>
<comment type="cofactor">
    <cofactor evidence="1">
        <name>Ni(2+)</name>
        <dbReference type="ChEBI" id="CHEBI:49786"/>
    </cofactor>
    <text evidence="1">Nickel for phosphatase activity.</text>
</comment>
<comment type="subunit">
    <text evidence="1">Monomer. Can also form homodimers and oligomers.</text>
</comment>
<comment type="domain">
    <text evidence="1">Comprises two domains: an N-terminal domain containing the nucleotidyltransferase activity and a C-terminal HD domain associated with both phosphodiesterase and phosphatase activities.</text>
</comment>
<comment type="miscellaneous">
    <text evidence="1">A single active site specifically recognizes both ATP and CTP and is responsible for their addition.</text>
</comment>
<comment type="similarity">
    <text evidence="1">Belongs to the tRNA nucleotidyltransferase/poly(A) polymerase family. Bacterial CCA-adding enzyme type 1 subfamily.</text>
</comment>
<keyword id="KW-0067">ATP-binding</keyword>
<keyword id="KW-0378">Hydrolase</keyword>
<keyword id="KW-0460">Magnesium</keyword>
<keyword id="KW-0479">Metal-binding</keyword>
<keyword id="KW-0511">Multifunctional enzyme</keyword>
<keyword id="KW-0533">Nickel</keyword>
<keyword id="KW-0547">Nucleotide-binding</keyword>
<keyword id="KW-0548">Nucleotidyltransferase</keyword>
<keyword id="KW-1185">Reference proteome</keyword>
<keyword id="KW-0692">RNA repair</keyword>
<keyword id="KW-0694">RNA-binding</keyword>
<keyword id="KW-0808">Transferase</keyword>
<keyword id="KW-0819">tRNA processing</keyword>
<feature type="chain" id="PRO_1000054269" description="Multifunctional CCA protein">
    <location>
        <begin position="1"/>
        <end position="415"/>
    </location>
</feature>
<feature type="domain" description="HD" evidence="1">
    <location>
        <begin position="228"/>
        <end position="329"/>
    </location>
</feature>
<feature type="binding site" evidence="1">
    <location>
        <position position="8"/>
    </location>
    <ligand>
        <name>ATP</name>
        <dbReference type="ChEBI" id="CHEBI:30616"/>
    </ligand>
</feature>
<feature type="binding site" evidence="1">
    <location>
        <position position="8"/>
    </location>
    <ligand>
        <name>CTP</name>
        <dbReference type="ChEBI" id="CHEBI:37563"/>
    </ligand>
</feature>
<feature type="binding site" evidence="1">
    <location>
        <position position="11"/>
    </location>
    <ligand>
        <name>ATP</name>
        <dbReference type="ChEBI" id="CHEBI:30616"/>
    </ligand>
</feature>
<feature type="binding site" evidence="1">
    <location>
        <position position="11"/>
    </location>
    <ligand>
        <name>CTP</name>
        <dbReference type="ChEBI" id="CHEBI:37563"/>
    </ligand>
</feature>
<feature type="binding site" evidence="1">
    <location>
        <position position="21"/>
    </location>
    <ligand>
        <name>Mg(2+)</name>
        <dbReference type="ChEBI" id="CHEBI:18420"/>
    </ligand>
</feature>
<feature type="binding site" evidence="1">
    <location>
        <position position="23"/>
    </location>
    <ligand>
        <name>Mg(2+)</name>
        <dbReference type="ChEBI" id="CHEBI:18420"/>
    </ligand>
</feature>
<feature type="binding site" evidence="1">
    <location>
        <position position="91"/>
    </location>
    <ligand>
        <name>ATP</name>
        <dbReference type="ChEBI" id="CHEBI:30616"/>
    </ligand>
</feature>
<feature type="binding site" evidence="1">
    <location>
        <position position="91"/>
    </location>
    <ligand>
        <name>CTP</name>
        <dbReference type="ChEBI" id="CHEBI:37563"/>
    </ligand>
</feature>
<feature type="binding site" evidence="1">
    <location>
        <position position="137"/>
    </location>
    <ligand>
        <name>ATP</name>
        <dbReference type="ChEBI" id="CHEBI:30616"/>
    </ligand>
</feature>
<feature type="binding site" evidence="1">
    <location>
        <position position="137"/>
    </location>
    <ligand>
        <name>CTP</name>
        <dbReference type="ChEBI" id="CHEBI:37563"/>
    </ligand>
</feature>
<feature type="binding site" evidence="1">
    <location>
        <position position="140"/>
    </location>
    <ligand>
        <name>ATP</name>
        <dbReference type="ChEBI" id="CHEBI:30616"/>
    </ligand>
</feature>
<feature type="binding site" evidence="1">
    <location>
        <position position="140"/>
    </location>
    <ligand>
        <name>CTP</name>
        <dbReference type="ChEBI" id="CHEBI:37563"/>
    </ligand>
</feature>
<organism>
    <name type="scientific">Halorhodospira halophila (strain DSM 244 / SL1)</name>
    <name type="common">Ectothiorhodospira halophila (strain DSM 244 / SL1)</name>
    <dbReference type="NCBI Taxonomy" id="349124"/>
    <lineage>
        <taxon>Bacteria</taxon>
        <taxon>Pseudomonadati</taxon>
        <taxon>Pseudomonadota</taxon>
        <taxon>Gammaproteobacteria</taxon>
        <taxon>Chromatiales</taxon>
        <taxon>Ectothiorhodospiraceae</taxon>
        <taxon>Halorhodospira</taxon>
    </lineage>
</organism>
<evidence type="ECO:0000255" key="1">
    <source>
        <dbReference type="HAMAP-Rule" id="MF_01261"/>
    </source>
</evidence>
<name>CCA_HALHL</name>
<dbReference type="EC" id="2.7.7.72" evidence="1"/>
<dbReference type="EC" id="3.1.3.-" evidence="1"/>
<dbReference type="EC" id="3.1.4.-" evidence="1"/>
<dbReference type="EMBL" id="CP000544">
    <property type="protein sequence ID" value="ABM63094.1"/>
    <property type="molecule type" value="Genomic_DNA"/>
</dbReference>
<dbReference type="RefSeq" id="WP_011815116.1">
    <property type="nucleotide sequence ID" value="NC_008789.1"/>
</dbReference>
<dbReference type="SMR" id="A1WZI2"/>
<dbReference type="STRING" id="349124.Hhal_2331"/>
<dbReference type="KEGG" id="hha:Hhal_2331"/>
<dbReference type="eggNOG" id="COG0617">
    <property type="taxonomic scope" value="Bacteria"/>
</dbReference>
<dbReference type="HOGENOM" id="CLU_015961_1_1_6"/>
<dbReference type="OrthoDB" id="9805698at2"/>
<dbReference type="Proteomes" id="UP000000647">
    <property type="component" value="Chromosome"/>
</dbReference>
<dbReference type="GO" id="GO:0005524">
    <property type="term" value="F:ATP binding"/>
    <property type="evidence" value="ECO:0007669"/>
    <property type="project" value="UniProtKB-UniRule"/>
</dbReference>
<dbReference type="GO" id="GO:0004810">
    <property type="term" value="F:CCA tRNA nucleotidyltransferase activity"/>
    <property type="evidence" value="ECO:0007669"/>
    <property type="project" value="UniProtKB-UniRule"/>
</dbReference>
<dbReference type="GO" id="GO:0004112">
    <property type="term" value="F:cyclic-nucleotide phosphodiesterase activity"/>
    <property type="evidence" value="ECO:0007669"/>
    <property type="project" value="UniProtKB-UniRule"/>
</dbReference>
<dbReference type="GO" id="GO:0000287">
    <property type="term" value="F:magnesium ion binding"/>
    <property type="evidence" value="ECO:0007669"/>
    <property type="project" value="UniProtKB-UniRule"/>
</dbReference>
<dbReference type="GO" id="GO:0016791">
    <property type="term" value="F:phosphatase activity"/>
    <property type="evidence" value="ECO:0007669"/>
    <property type="project" value="UniProtKB-UniRule"/>
</dbReference>
<dbReference type="GO" id="GO:0000049">
    <property type="term" value="F:tRNA binding"/>
    <property type="evidence" value="ECO:0007669"/>
    <property type="project" value="UniProtKB-UniRule"/>
</dbReference>
<dbReference type="GO" id="GO:0042245">
    <property type="term" value="P:RNA repair"/>
    <property type="evidence" value="ECO:0007669"/>
    <property type="project" value="UniProtKB-KW"/>
</dbReference>
<dbReference type="GO" id="GO:0001680">
    <property type="term" value="P:tRNA 3'-terminal CCA addition"/>
    <property type="evidence" value="ECO:0007669"/>
    <property type="project" value="UniProtKB-UniRule"/>
</dbReference>
<dbReference type="CDD" id="cd05398">
    <property type="entry name" value="NT_ClassII-CCAase"/>
    <property type="match status" value="1"/>
</dbReference>
<dbReference type="Gene3D" id="3.30.460.10">
    <property type="entry name" value="Beta Polymerase, domain 2"/>
    <property type="match status" value="1"/>
</dbReference>
<dbReference type="Gene3D" id="1.10.3090.10">
    <property type="entry name" value="cca-adding enzyme, domain 2"/>
    <property type="match status" value="1"/>
</dbReference>
<dbReference type="HAMAP" id="MF_01261">
    <property type="entry name" value="CCA_bact_type1"/>
    <property type="match status" value="1"/>
</dbReference>
<dbReference type="HAMAP" id="MF_01262">
    <property type="entry name" value="CCA_bact_type2"/>
    <property type="match status" value="1"/>
</dbReference>
<dbReference type="InterPro" id="IPR012006">
    <property type="entry name" value="CCA_bact"/>
</dbReference>
<dbReference type="InterPro" id="IPR006674">
    <property type="entry name" value="HD_domain"/>
</dbReference>
<dbReference type="InterPro" id="IPR043519">
    <property type="entry name" value="NT_sf"/>
</dbReference>
<dbReference type="InterPro" id="IPR002646">
    <property type="entry name" value="PolA_pol_head_dom"/>
</dbReference>
<dbReference type="InterPro" id="IPR032828">
    <property type="entry name" value="PolyA_RNA-bd"/>
</dbReference>
<dbReference type="InterPro" id="IPR050124">
    <property type="entry name" value="tRNA_CCA-adding_enzyme"/>
</dbReference>
<dbReference type="NCBIfam" id="NF008137">
    <property type="entry name" value="PRK10885.1"/>
    <property type="match status" value="1"/>
</dbReference>
<dbReference type="PANTHER" id="PTHR47545">
    <property type="entry name" value="MULTIFUNCTIONAL CCA PROTEIN"/>
    <property type="match status" value="1"/>
</dbReference>
<dbReference type="PANTHER" id="PTHR47545:SF1">
    <property type="entry name" value="MULTIFUNCTIONAL CCA PROTEIN"/>
    <property type="match status" value="1"/>
</dbReference>
<dbReference type="Pfam" id="PF01966">
    <property type="entry name" value="HD"/>
    <property type="match status" value="1"/>
</dbReference>
<dbReference type="Pfam" id="PF01743">
    <property type="entry name" value="PolyA_pol"/>
    <property type="match status" value="1"/>
</dbReference>
<dbReference type="Pfam" id="PF12627">
    <property type="entry name" value="PolyA_pol_RNAbd"/>
    <property type="match status" value="1"/>
</dbReference>
<dbReference type="PIRSF" id="PIRSF000813">
    <property type="entry name" value="CCA_bact"/>
    <property type="match status" value="1"/>
</dbReference>
<dbReference type="SUPFAM" id="SSF81301">
    <property type="entry name" value="Nucleotidyltransferase"/>
    <property type="match status" value="1"/>
</dbReference>
<dbReference type="SUPFAM" id="SSF81891">
    <property type="entry name" value="Poly A polymerase C-terminal region-like"/>
    <property type="match status" value="1"/>
</dbReference>
<dbReference type="PROSITE" id="PS51831">
    <property type="entry name" value="HD"/>
    <property type="match status" value="1"/>
</dbReference>
<proteinExistence type="inferred from homology"/>
<reference key="1">
    <citation type="submission" date="2006-12" db="EMBL/GenBank/DDBJ databases">
        <title>Complete sequence of Halorhodospira halophila SL1.</title>
        <authorList>
            <consortium name="US DOE Joint Genome Institute"/>
            <person name="Copeland A."/>
            <person name="Lucas S."/>
            <person name="Lapidus A."/>
            <person name="Barry K."/>
            <person name="Detter J.C."/>
            <person name="Glavina del Rio T."/>
            <person name="Hammon N."/>
            <person name="Israni S."/>
            <person name="Dalin E."/>
            <person name="Tice H."/>
            <person name="Pitluck S."/>
            <person name="Saunders E."/>
            <person name="Brettin T."/>
            <person name="Bruce D."/>
            <person name="Han C."/>
            <person name="Tapia R."/>
            <person name="Schmutz J."/>
            <person name="Larimer F."/>
            <person name="Land M."/>
            <person name="Hauser L."/>
            <person name="Kyrpides N."/>
            <person name="Mikhailova N."/>
            <person name="Hoff W."/>
            <person name="Richardson P."/>
        </authorList>
    </citation>
    <scope>NUCLEOTIDE SEQUENCE [LARGE SCALE GENOMIC DNA]</scope>
    <source>
        <strain>DSM 244 / SL1</strain>
    </source>
</reference>